<organism>
    <name type="scientific">Salmonella heidelberg (strain SL476)</name>
    <dbReference type="NCBI Taxonomy" id="454169"/>
    <lineage>
        <taxon>Bacteria</taxon>
        <taxon>Pseudomonadati</taxon>
        <taxon>Pseudomonadota</taxon>
        <taxon>Gammaproteobacteria</taxon>
        <taxon>Enterobacterales</taxon>
        <taxon>Enterobacteriaceae</taxon>
        <taxon>Salmonella</taxon>
    </lineage>
</organism>
<gene>
    <name evidence="1" type="primary">def</name>
    <name type="ordered locus">SeHA_C3710</name>
</gene>
<keyword id="KW-0378">Hydrolase</keyword>
<keyword id="KW-0408">Iron</keyword>
<keyword id="KW-0479">Metal-binding</keyword>
<keyword id="KW-0648">Protein biosynthesis</keyword>
<reference key="1">
    <citation type="journal article" date="2011" name="J. Bacteriol.">
        <title>Comparative genomics of 28 Salmonella enterica isolates: evidence for CRISPR-mediated adaptive sublineage evolution.</title>
        <authorList>
            <person name="Fricke W.F."/>
            <person name="Mammel M.K."/>
            <person name="McDermott P.F."/>
            <person name="Tartera C."/>
            <person name="White D.G."/>
            <person name="Leclerc J.E."/>
            <person name="Ravel J."/>
            <person name="Cebula T.A."/>
        </authorList>
    </citation>
    <scope>NUCLEOTIDE SEQUENCE [LARGE SCALE GENOMIC DNA]</scope>
    <source>
        <strain>SL476</strain>
    </source>
</reference>
<accession>B4TJX7</accession>
<protein>
    <recommendedName>
        <fullName evidence="1">Peptide deformylase</fullName>
        <shortName evidence="1">PDF</shortName>
        <ecNumber evidence="1">3.5.1.88</ecNumber>
    </recommendedName>
    <alternativeName>
        <fullName evidence="1">Polypeptide deformylase</fullName>
    </alternativeName>
</protein>
<proteinExistence type="inferred from homology"/>
<sequence length="169" mass="19282">MSVLQVLHIPDERLRKVAKPVEEVNAEIQRIVDDMFETMYAEEGIGLAATQVDIHQRIIVIDVSENRDERLVLINPELLEKSGETGIEEGCLSIPEQRALVPRAEKVKIRALDRDGNPFELEADGLLAICIQHEMDHLVGKLFIDYLSPLKQQRIRQKVEKLDRLNARA</sequence>
<comment type="function">
    <text evidence="1">Removes the formyl group from the N-terminal Met of newly synthesized proteins. Requires at least a dipeptide for an efficient rate of reaction. N-terminal L-methionine is a prerequisite for activity but the enzyme has broad specificity at other positions.</text>
</comment>
<comment type="catalytic activity">
    <reaction evidence="1">
        <text>N-terminal N-formyl-L-methionyl-[peptide] + H2O = N-terminal L-methionyl-[peptide] + formate</text>
        <dbReference type="Rhea" id="RHEA:24420"/>
        <dbReference type="Rhea" id="RHEA-COMP:10639"/>
        <dbReference type="Rhea" id="RHEA-COMP:10640"/>
        <dbReference type="ChEBI" id="CHEBI:15377"/>
        <dbReference type="ChEBI" id="CHEBI:15740"/>
        <dbReference type="ChEBI" id="CHEBI:49298"/>
        <dbReference type="ChEBI" id="CHEBI:64731"/>
        <dbReference type="EC" id="3.5.1.88"/>
    </reaction>
</comment>
<comment type="cofactor">
    <cofactor evidence="1">
        <name>Fe(2+)</name>
        <dbReference type="ChEBI" id="CHEBI:29033"/>
    </cofactor>
    <text evidence="1">Binds 1 Fe(2+) ion.</text>
</comment>
<comment type="similarity">
    <text evidence="1">Belongs to the polypeptide deformylase family.</text>
</comment>
<dbReference type="EC" id="3.5.1.88" evidence="1"/>
<dbReference type="EMBL" id="CP001120">
    <property type="protein sequence ID" value="ACF69819.1"/>
    <property type="molecule type" value="Genomic_DNA"/>
</dbReference>
<dbReference type="RefSeq" id="WP_000114987.1">
    <property type="nucleotide sequence ID" value="NC_011083.1"/>
</dbReference>
<dbReference type="SMR" id="B4TJX7"/>
<dbReference type="KEGG" id="seh:SeHA_C3710"/>
<dbReference type="HOGENOM" id="CLU_061901_2_1_6"/>
<dbReference type="Proteomes" id="UP000001866">
    <property type="component" value="Chromosome"/>
</dbReference>
<dbReference type="GO" id="GO:0046872">
    <property type="term" value="F:metal ion binding"/>
    <property type="evidence" value="ECO:0007669"/>
    <property type="project" value="UniProtKB-KW"/>
</dbReference>
<dbReference type="GO" id="GO:0042586">
    <property type="term" value="F:peptide deformylase activity"/>
    <property type="evidence" value="ECO:0007669"/>
    <property type="project" value="UniProtKB-UniRule"/>
</dbReference>
<dbReference type="GO" id="GO:0043686">
    <property type="term" value="P:co-translational protein modification"/>
    <property type="evidence" value="ECO:0007669"/>
    <property type="project" value="TreeGrafter"/>
</dbReference>
<dbReference type="GO" id="GO:0006412">
    <property type="term" value="P:translation"/>
    <property type="evidence" value="ECO:0007669"/>
    <property type="project" value="UniProtKB-UniRule"/>
</dbReference>
<dbReference type="CDD" id="cd00487">
    <property type="entry name" value="Pep_deformylase"/>
    <property type="match status" value="1"/>
</dbReference>
<dbReference type="FunFam" id="3.90.45.10:FF:000001">
    <property type="entry name" value="Peptide deformylase"/>
    <property type="match status" value="1"/>
</dbReference>
<dbReference type="Gene3D" id="3.90.45.10">
    <property type="entry name" value="Peptide deformylase"/>
    <property type="match status" value="1"/>
</dbReference>
<dbReference type="HAMAP" id="MF_00163">
    <property type="entry name" value="Pep_deformylase"/>
    <property type="match status" value="1"/>
</dbReference>
<dbReference type="InterPro" id="IPR023635">
    <property type="entry name" value="Peptide_deformylase"/>
</dbReference>
<dbReference type="InterPro" id="IPR036821">
    <property type="entry name" value="Peptide_deformylase_sf"/>
</dbReference>
<dbReference type="NCBIfam" id="TIGR00079">
    <property type="entry name" value="pept_deformyl"/>
    <property type="match status" value="1"/>
</dbReference>
<dbReference type="NCBIfam" id="NF001159">
    <property type="entry name" value="PRK00150.1-3"/>
    <property type="match status" value="1"/>
</dbReference>
<dbReference type="PANTHER" id="PTHR10458">
    <property type="entry name" value="PEPTIDE DEFORMYLASE"/>
    <property type="match status" value="1"/>
</dbReference>
<dbReference type="PANTHER" id="PTHR10458:SF21">
    <property type="entry name" value="PEPTIDE DEFORMYLASE"/>
    <property type="match status" value="1"/>
</dbReference>
<dbReference type="Pfam" id="PF01327">
    <property type="entry name" value="Pep_deformylase"/>
    <property type="match status" value="1"/>
</dbReference>
<dbReference type="PIRSF" id="PIRSF004749">
    <property type="entry name" value="Pep_def"/>
    <property type="match status" value="1"/>
</dbReference>
<dbReference type="PRINTS" id="PR01576">
    <property type="entry name" value="PDEFORMYLASE"/>
</dbReference>
<dbReference type="SUPFAM" id="SSF56420">
    <property type="entry name" value="Peptide deformylase"/>
    <property type="match status" value="1"/>
</dbReference>
<name>DEF_SALHS</name>
<evidence type="ECO:0000255" key="1">
    <source>
        <dbReference type="HAMAP-Rule" id="MF_00163"/>
    </source>
</evidence>
<feature type="chain" id="PRO_1000097340" description="Peptide deformylase">
    <location>
        <begin position="1"/>
        <end position="169"/>
    </location>
</feature>
<feature type="active site" evidence="1">
    <location>
        <position position="134"/>
    </location>
</feature>
<feature type="binding site" evidence="1">
    <location>
        <position position="91"/>
    </location>
    <ligand>
        <name>Fe cation</name>
        <dbReference type="ChEBI" id="CHEBI:24875"/>
    </ligand>
</feature>
<feature type="binding site" evidence="1">
    <location>
        <position position="133"/>
    </location>
    <ligand>
        <name>Fe cation</name>
        <dbReference type="ChEBI" id="CHEBI:24875"/>
    </ligand>
</feature>
<feature type="binding site" evidence="1">
    <location>
        <position position="137"/>
    </location>
    <ligand>
        <name>Fe cation</name>
        <dbReference type="ChEBI" id="CHEBI:24875"/>
    </ligand>
</feature>